<name>HXA7_HETFR</name>
<proteinExistence type="inferred from homology"/>
<gene>
    <name type="primary">HOXA7</name>
</gene>
<comment type="function">
    <text evidence="1">Sequence-specific transcription factor which is part of a developmental regulatory system that provides cells with specific positional identities on the anterior-posterior axis.</text>
</comment>
<comment type="subcellular location">
    <subcellularLocation>
        <location evidence="2">Nucleus</location>
    </subcellularLocation>
</comment>
<comment type="similarity">
    <text evidence="3">Belongs to the Antp homeobox family.</text>
</comment>
<sequence length="208" mass="23787">MSSSYYVNALFPKYTAGTSVFQNASGFTEATSCAFATNSQRSSYGAGASAFPAPMAGLYNVNSAIYHGPTMYNTGYNLNSDSYNLRCSALDQNIPVLCSDLSKQGCEKLDQTNVHPQAESNFRIYPWMRNAGPDRKRGRQTYTRYQTLELEKEFHFNRYLTRRRRIEIAHALCLTERQIKIWFQNRRMKWKKETKAGSSSTTSEEKQE</sequence>
<evidence type="ECO:0000250" key="1"/>
<evidence type="ECO:0000255" key="2">
    <source>
        <dbReference type="PROSITE-ProRule" id="PRU00108"/>
    </source>
</evidence>
<evidence type="ECO:0000305" key="3"/>
<dbReference type="EMBL" id="AF224262">
    <property type="protein sequence ID" value="AAF44645.1"/>
    <property type="molecule type" value="Genomic_DNA"/>
</dbReference>
<dbReference type="SMR" id="Q9IA25"/>
<dbReference type="GO" id="GO:0005634">
    <property type="term" value="C:nucleus"/>
    <property type="evidence" value="ECO:0007669"/>
    <property type="project" value="UniProtKB-SubCell"/>
</dbReference>
<dbReference type="GO" id="GO:0000981">
    <property type="term" value="F:DNA-binding transcription factor activity, RNA polymerase II-specific"/>
    <property type="evidence" value="ECO:0007669"/>
    <property type="project" value="InterPro"/>
</dbReference>
<dbReference type="GO" id="GO:0000978">
    <property type="term" value="F:RNA polymerase II cis-regulatory region sequence-specific DNA binding"/>
    <property type="evidence" value="ECO:0007669"/>
    <property type="project" value="TreeGrafter"/>
</dbReference>
<dbReference type="GO" id="GO:0009952">
    <property type="term" value="P:anterior/posterior pattern specification"/>
    <property type="evidence" value="ECO:0007669"/>
    <property type="project" value="TreeGrafter"/>
</dbReference>
<dbReference type="CDD" id="cd00086">
    <property type="entry name" value="homeodomain"/>
    <property type="match status" value="1"/>
</dbReference>
<dbReference type="FunFam" id="1.10.10.60:FF:000017">
    <property type="entry name" value="Homeobox protein antennapedia"/>
    <property type="match status" value="1"/>
</dbReference>
<dbReference type="Gene3D" id="1.10.10.60">
    <property type="entry name" value="Homeodomain-like"/>
    <property type="match status" value="1"/>
</dbReference>
<dbReference type="InterPro" id="IPR050296">
    <property type="entry name" value="Antp_homeobox"/>
</dbReference>
<dbReference type="InterPro" id="IPR001356">
    <property type="entry name" value="HD"/>
</dbReference>
<dbReference type="InterPro" id="IPR020479">
    <property type="entry name" value="HD_metazoa"/>
</dbReference>
<dbReference type="InterPro" id="IPR017995">
    <property type="entry name" value="Homeobox_antennapedia"/>
</dbReference>
<dbReference type="InterPro" id="IPR001827">
    <property type="entry name" value="Homeobox_Antennapedia_CS"/>
</dbReference>
<dbReference type="InterPro" id="IPR017970">
    <property type="entry name" value="Homeobox_CS"/>
</dbReference>
<dbReference type="InterPro" id="IPR009057">
    <property type="entry name" value="Homeodomain-like_sf"/>
</dbReference>
<dbReference type="PANTHER" id="PTHR45659">
    <property type="entry name" value="HOMEOBOX PROTEIN HOX"/>
    <property type="match status" value="1"/>
</dbReference>
<dbReference type="PANTHER" id="PTHR45659:SF12">
    <property type="entry name" value="HOMEOBOX PROTEIN HOX-A7"/>
    <property type="match status" value="1"/>
</dbReference>
<dbReference type="Pfam" id="PF00046">
    <property type="entry name" value="Homeodomain"/>
    <property type="match status" value="1"/>
</dbReference>
<dbReference type="PRINTS" id="PR00025">
    <property type="entry name" value="ANTENNAPEDIA"/>
</dbReference>
<dbReference type="PRINTS" id="PR00024">
    <property type="entry name" value="HOMEOBOX"/>
</dbReference>
<dbReference type="SMART" id="SM00389">
    <property type="entry name" value="HOX"/>
    <property type="match status" value="1"/>
</dbReference>
<dbReference type="SUPFAM" id="SSF46689">
    <property type="entry name" value="Homeodomain-like"/>
    <property type="match status" value="1"/>
</dbReference>
<dbReference type="PROSITE" id="PS00032">
    <property type="entry name" value="ANTENNAPEDIA"/>
    <property type="match status" value="1"/>
</dbReference>
<dbReference type="PROSITE" id="PS00027">
    <property type="entry name" value="HOMEOBOX_1"/>
    <property type="match status" value="1"/>
</dbReference>
<dbReference type="PROSITE" id="PS50071">
    <property type="entry name" value="HOMEOBOX_2"/>
    <property type="match status" value="1"/>
</dbReference>
<feature type="chain" id="PRO_0000200077" description="Homeobox protein Hox-A7">
    <location>
        <begin position="1"/>
        <end position="208"/>
    </location>
</feature>
<feature type="DNA-binding region" description="Homeobox" evidence="2">
    <location>
        <begin position="135"/>
        <end position="194"/>
    </location>
</feature>
<feature type="short sequence motif" description="Antp-type hexapeptide">
    <location>
        <begin position="124"/>
        <end position="129"/>
    </location>
</feature>
<organism>
    <name type="scientific">Heterodontus francisci</name>
    <name type="common">Horn shark</name>
    <name type="synonym">Cestracion francisci</name>
    <dbReference type="NCBI Taxonomy" id="7792"/>
    <lineage>
        <taxon>Eukaryota</taxon>
        <taxon>Metazoa</taxon>
        <taxon>Chordata</taxon>
        <taxon>Craniata</taxon>
        <taxon>Vertebrata</taxon>
        <taxon>Chondrichthyes</taxon>
        <taxon>Elasmobranchii</taxon>
        <taxon>Galeomorphii</taxon>
        <taxon>Heterodontoidea</taxon>
        <taxon>Heterodontiformes</taxon>
        <taxon>Heterodontidae</taxon>
        <taxon>Heterodontus</taxon>
    </lineage>
</organism>
<keyword id="KW-0217">Developmental protein</keyword>
<keyword id="KW-0238">DNA-binding</keyword>
<keyword id="KW-0371">Homeobox</keyword>
<keyword id="KW-0539">Nucleus</keyword>
<keyword id="KW-0804">Transcription</keyword>
<keyword id="KW-0805">Transcription regulation</keyword>
<reference key="1">
    <citation type="journal article" date="2000" name="Proc. Natl. Acad. Sci. U.S.A.">
        <title>Hox cluster genomics in the horn shark, Heterodontus francisci.</title>
        <authorList>
            <person name="Kim C.B."/>
            <person name="Amemiya C."/>
            <person name="Bailey W."/>
            <person name="Kawasaki K."/>
            <person name="Mezey J."/>
            <person name="Miller W."/>
            <person name="Minoshima S."/>
            <person name="Shimizu N."/>
            <person name="Wagner G."/>
            <person name="Ruddle F."/>
        </authorList>
    </citation>
    <scope>NUCLEOTIDE SEQUENCE [GENOMIC DNA]</scope>
</reference>
<protein>
    <recommendedName>
        <fullName>Homeobox protein Hox-A7</fullName>
    </recommendedName>
</protein>
<accession>Q9IA25</accession>